<geneLocation type="mitochondrion"/>
<feature type="chain" id="PRO_0000196885" description="Uncharacterized cox1 intron-2 37.2 kDa protein">
    <location>
        <begin position="1"/>
        <end position="323"/>
    </location>
</feature>
<name>YMC2_SCHPO</name>
<dbReference type="EMBL" id="X54421">
    <property type="protein sequence ID" value="CAA38286.1"/>
    <property type="molecule type" value="Genomic_DNA"/>
</dbReference>
<dbReference type="RefSeq" id="NP_039501.1">
    <property type="nucleotide sequence ID" value="NC_001326.1"/>
</dbReference>
<dbReference type="SMR" id="P22190"/>
<dbReference type="FunCoup" id="P22190">
    <property type="interactions" value="1"/>
</dbReference>
<dbReference type="STRING" id="284812.P22190"/>
<dbReference type="PaxDb" id="4896-SPMIT.03.1"/>
<dbReference type="PomBase" id="SPMIT.03"/>
<dbReference type="eggNOG" id="ENOG502S0RZ">
    <property type="taxonomic scope" value="Eukaryota"/>
</dbReference>
<dbReference type="InParanoid" id="P22190"/>
<dbReference type="PhylomeDB" id="P22190"/>
<dbReference type="PRO" id="PR:P22190"/>
<dbReference type="Proteomes" id="UP000002485">
    <property type="component" value="Mitochondrion"/>
</dbReference>
<dbReference type="GO" id="GO:0000262">
    <property type="term" value="C:mitochondrial chromosome"/>
    <property type="evidence" value="ECO:0000305"/>
    <property type="project" value="PomBase"/>
</dbReference>
<dbReference type="GO" id="GO:0003677">
    <property type="term" value="F:DNA binding"/>
    <property type="evidence" value="ECO:0000255"/>
    <property type="project" value="PomBase"/>
</dbReference>
<dbReference type="GO" id="GO:0004519">
    <property type="term" value="F:endonuclease activity"/>
    <property type="evidence" value="ECO:0000255"/>
    <property type="project" value="PomBase"/>
</dbReference>
<dbReference type="GO" id="GO:0006314">
    <property type="term" value="P:intron homing"/>
    <property type="evidence" value="ECO:0000255"/>
    <property type="project" value="PomBase"/>
</dbReference>
<dbReference type="Gene3D" id="3.10.28.10">
    <property type="entry name" value="Homing endonucleases"/>
    <property type="match status" value="2"/>
</dbReference>
<dbReference type="InterPro" id="IPR027434">
    <property type="entry name" value="Homing_endonucl"/>
</dbReference>
<dbReference type="InterPro" id="IPR004860">
    <property type="entry name" value="LAGLIDADG_dom"/>
</dbReference>
<dbReference type="InterPro" id="IPR051289">
    <property type="entry name" value="LAGLIDADG_Endonuclease"/>
</dbReference>
<dbReference type="PANTHER" id="PTHR36181:SF3">
    <property type="entry name" value="INTRON-ENCODED DNA ENDONUCLEASE AI5 BETA"/>
    <property type="match status" value="1"/>
</dbReference>
<dbReference type="PANTHER" id="PTHR36181">
    <property type="entry name" value="INTRON-ENCODED ENDONUCLEASE AI3-RELATED"/>
    <property type="match status" value="1"/>
</dbReference>
<dbReference type="Pfam" id="PF00961">
    <property type="entry name" value="LAGLIDADG_1"/>
    <property type="match status" value="2"/>
</dbReference>
<dbReference type="SUPFAM" id="SSF55608">
    <property type="entry name" value="Homing endonucleases"/>
    <property type="match status" value="2"/>
</dbReference>
<sequence>NLIGLLTLLYAGTTWKILDKSFCFKYSKKNTRLVFIFIVKMLKQLSISAGNLLNKGTSETLRNEITTKKVSIHLPKHLKPANDSQFGHYLAGLIDGDGHFSSKQQLIIAFHSLDIQLAYYIKKQIGYGIVRKIKDKNAILFIIANSKGIERVITLINNKFRTTSKYNQIINNIFAHPRFKEFSKTITLGLNSNNNLNNHWLAGFSDADASFQIKILNRDKKIEVRLNYQIDQKKEYLLSLIKDNLGGNIGYRKSQDTYYYGSTSFGSAKKVINYFDNYHLLSSKYISYLKWRKAYLIIQENKHLTESGLSQIKKPHPYRKNIN</sequence>
<reference key="1">
    <citation type="book" date="1993" name="Genetic Maps (6th edition)">
        <title>The mitochondrial genome of Schizosaccharomyces pombe.</title>
        <editorList>
            <person name="O'Brien S.J."/>
        </editorList>
        <authorList>
            <person name="Lang B.F."/>
        </authorList>
    </citation>
    <scope>NUCLEOTIDE SEQUENCE [LARGE SCALE GENOMIC DNA]</scope>
    <source>
        <strain>AD7-50</strain>
    </source>
</reference>
<proteinExistence type="predicted"/>
<accession>P22190</accession>
<organism>
    <name type="scientific">Schizosaccharomyces pombe (strain 972 / ATCC 24843)</name>
    <name type="common">Fission yeast</name>
    <dbReference type="NCBI Taxonomy" id="284812"/>
    <lineage>
        <taxon>Eukaryota</taxon>
        <taxon>Fungi</taxon>
        <taxon>Dikarya</taxon>
        <taxon>Ascomycota</taxon>
        <taxon>Taphrinomycotina</taxon>
        <taxon>Schizosaccharomycetes</taxon>
        <taxon>Schizosaccharomycetales</taxon>
        <taxon>Schizosaccharomycetaceae</taxon>
        <taxon>Schizosaccharomyces</taxon>
    </lineage>
</organism>
<comment type="subcellular location">
    <subcellularLocation>
        <location evidence="1">Mitochondrion</location>
    </subcellularLocation>
</comment>
<comment type="miscellaneous">
    <text>This protein is coded in group-I intron 2 of cox1.</text>
</comment>
<evidence type="ECO:0000305" key="1"/>
<protein>
    <recommendedName>
        <fullName>Uncharacterized cox1 intron-2 37.2 kDa protein</fullName>
    </recommendedName>
    <alternativeName>
        <fullName>Probable maturase</fullName>
    </alternativeName>
</protein>
<gene>
    <name type="ORF">SPMIT.03</name>
</gene>
<keyword id="KW-0496">Mitochondrion</keyword>
<keyword id="KW-1185">Reference proteome</keyword>